<feature type="initiator methionine" description="Removed">
    <location>
        <position position="1"/>
    </location>
</feature>
<feature type="chain" id="PRO_0000201438" description="Hydrogenase maturation factor HypB">
    <location>
        <begin position="2"/>
        <end position="299"/>
    </location>
</feature>
<feature type="region of interest" description="Disordered" evidence="2">
    <location>
        <begin position="18"/>
        <end position="57"/>
    </location>
</feature>
<feature type="region of interest" description="G-domain" evidence="1">
    <location>
        <begin position="107"/>
        <end position="268"/>
    </location>
</feature>
<feature type="compositionally biased region" description="Basic and acidic residues" evidence="2">
    <location>
        <begin position="31"/>
        <end position="57"/>
    </location>
</feature>
<feature type="binding site" evidence="1">
    <location>
        <position position="2"/>
    </location>
    <ligand>
        <name>Ni(2+)</name>
        <dbReference type="ChEBI" id="CHEBI:49786"/>
        <label>1</label>
    </ligand>
</feature>
<feature type="binding site" evidence="1">
    <location>
        <position position="5"/>
    </location>
    <ligand>
        <name>Ni(2+)</name>
        <dbReference type="ChEBI" id="CHEBI:49786"/>
        <label>1</label>
    </ligand>
</feature>
<feature type="binding site" evidence="1">
    <location>
        <position position="7"/>
    </location>
    <ligand>
        <name>Ni(2+)</name>
        <dbReference type="ChEBI" id="CHEBI:49786"/>
        <label>1</label>
    </ligand>
</feature>
<feature type="binding site" evidence="1">
    <location>
        <position position="167"/>
    </location>
    <ligand>
        <name>Ni(2+)</name>
        <dbReference type="ChEBI" id="CHEBI:49786"/>
        <label>2</label>
    </ligand>
</feature>
<feature type="binding site" evidence="1">
    <location>
        <position position="167"/>
    </location>
    <ligand>
        <name>Zn(2+)</name>
        <dbReference type="ChEBI" id="CHEBI:29105"/>
    </ligand>
</feature>
<feature type="binding site" evidence="1">
    <location>
        <position position="168"/>
    </location>
    <ligand>
        <name>Ni(2+)</name>
        <dbReference type="ChEBI" id="CHEBI:49786"/>
        <label>2</label>
    </ligand>
</feature>
<feature type="binding site" evidence="1">
    <location>
        <position position="168"/>
    </location>
    <ligand>
        <name>Zn(2+)</name>
        <dbReference type="ChEBI" id="CHEBI:29105"/>
    </ligand>
</feature>
<feature type="binding site" evidence="1">
    <location>
        <position position="199"/>
    </location>
    <ligand>
        <name>Ni(2+)</name>
        <dbReference type="ChEBI" id="CHEBI:49786"/>
        <label>2</label>
    </ligand>
</feature>
<feature type="binding site" evidence="1">
    <location>
        <position position="199"/>
    </location>
    <ligand>
        <name>Zn(2+)</name>
        <dbReference type="ChEBI" id="CHEBI:29105"/>
    </ligand>
</feature>
<feature type="sequence conflict" description="In Ref. 3; AA sequence." evidence="6" ref="3">
    <original>E</original>
    <variation>G</variation>
    <location>
        <position position="13"/>
    </location>
</feature>
<accession>P28155</accession>
<evidence type="ECO:0000250" key="1">
    <source>
        <dbReference type="UniProtKB" id="P0AAN3"/>
    </source>
</evidence>
<evidence type="ECO:0000256" key="2">
    <source>
        <dbReference type="SAM" id="MobiDB-lite"/>
    </source>
</evidence>
<evidence type="ECO:0000269" key="3">
    <source>
    </source>
</evidence>
<evidence type="ECO:0000269" key="4">
    <source>
    </source>
</evidence>
<evidence type="ECO:0000303" key="5">
    <source>
    </source>
</evidence>
<evidence type="ECO:0000305" key="6"/>
<name>HYPB_RHILV</name>
<proteinExistence type="evidence at protein level"/>
<comment type="function">
    <text evidence="1 3">Involved in the maturation of [NiFe] hydrogenases. Required for nickel insertion into the metal center of the hydrogenase. Exhibits a low intrinsic GTPase activity, which is essential for nickel insertion (By similarity). Is able to bind 4 nickel ions per subunit. Can also bind zinc (PubMed:7928968).</text>
</comment>
<comment type="developmental stage">
    <text evidence="3">Is synthesized in microaerobic vegetative cells and pea bacteroids but not in aerobic vegetative cells.</text>
</comment>
<comment type="domain">
    <text evidence="3">A histidine-rich region at the N-terminus is proposed to play a role in nickel binding, both in solution and in chelated form.</text>
</comment>
<comment type="disruption phenotype">
    <text evidence="4">Insertion mutant lacks any hydrogenase activity in symbiosis with peas, but is still able to synthesize the polypeptide for the hydrogenase large subunit.</text>
</comment>
<comment type="similarity">
    <text evidence="6">Belongs to the SIMIBI class G3E GTPase family. HypB/HupM subfamily.</text>
</comment>
<dbReference type="EMBL" id="X52974">
    <property type="protein sequence ID" value="CAA37160.1"/>
    <property type="molecule type" value="Genomic_DNA"/>
</dbReference>
<dbReference type="EMBL" id="Z36981">
    <property type="protein sequence ID" value="CAA85442.1"/>
    <property type="molecule type" value="Genomic_DNA"/>
</dbReference>
<dbReference type="PIR" id="S32874">
    <property type="entry name" value="S32874"/>
</dbReference>
<dbReference type="RefSeq" id="WP_026242367.1">
    <property type="nucleotide sequence ID" value="NZ_SJNH01000008.1"/>
</dbReference>
<dbReference type="SMR" id="P28155"/>
<dbReference type="GO" id="GO:0005525">
    <property type="term" value="F:GTP binding"/>
    <property type="evidence" value="ECO:0007669"/>
    <property type="project" value="UniProtKB-KW"/>
</dbReference>
<dbReference type="GO" id="GO:0003924">
    <property type="term" value="F:GTPase activity"/>
    <property type="evidence" value="ECO:0007669"/>
    <property type="project" value="InterPro"/>
</dbReference>
<dbReference type="GO" id="GO:0016151">
    <property type="term" value="F:nickel cation binding"/>
    <property type="evidence" value="ECO:0007669"/>
    <property type="project" value="InterPro"/>
</dbReference>
<dbReference type="GO" id="GO:0008270">
    <property type="term" value="F:zinc ion binding"/>
    <property type="evidence" value="ECO:0007669"/>
    <property type="project" value="TreeGrafter"/>
</dbReference>
<dbReference type="GO" id="GO:0051604">
    <property type="term" value="P:protein maturation"/>
    <property type="evidence" value="ECO:0007669"/>
    <property type="project" value="InterPro"/>
</dbReference>
<dbReference type="CDD" id="cd05390">
    <property type="entry name" value="HypB"/>
    <property type="match status" value="1"/>
</dbReference>
<dbReference type="Gene3D" id="3.40.50.300">
    <property type="entry name" value="P-loop containing nucleotide triphosphate hydrolases"/>
    <property type="match status" value="1"/>
</dbReference>
<dbReference type="InterPro" id="IPR003495">
    <property type="entry name" value="CobW/HypB/UreG_nucleotide-bd"/>
</dbReference>
<dbReference type="InterPro" id="IPR004392">
    <property type="entry name" value="Hyd_mat_HypB"/>
</dbReference>
<dbReference type="InterPro" id="IPR027417">
    <property type="entry name" value="P-loop_NTPase"/>
</dbReference>
<dbReference type="NCBIfam" id="TIGR00073">
    <property type="entry name" value="hypB"/>
    <property type="match status" value="1"/>
</dbReference>
<dbReference type="NCBIfam" id="NF007775">
    <property type="entry name" value="PRK10463.1"/>
    <property type="match status" value="1"/>
</dbReference>
<dbReference type="PANTHER" id="PTHR30134:SF2">
    <property type="entry name" value="HYDROGENASE MATURATION FACTOR HYPB"/>
    <property type="match status" value="1"/>
</dbReference>
<dbReference type="PANTHER" id="PTHR30134">
    <property type="entry name" value="HYDROGENASE PROTEIN ASSEMBLY PROTEIN, NICKEL CHAPERONE"/>
    <property type="match status" value="1"/>
</dbReference>
<dbReference type="Pfam" id="PF02492">
    <property type="entry name" value="cobW"/>
    <property type="match status" value="1"/>
</dbReference>
<dbReference type="SUPFAM" id="SSF52540">
    <property type="entry name" value="P-loop containing nucleoside triphosphate hydrolases"/>
    <property type="match status" value="1"/>
</dbReference>
<keyword id="KW-0903">Direct protein sequencing</keyword>
<keyword id="KW-0342">GTP-binding</keyword>
<keyword id="KW-0378">Hydrolase</keyword>
<keyword id="KW-0479">Metal-binding</keyword>
<keyword id="KW-0533">Nickel</keyword>
<keyword id="KW-0547">Nucleotide-binding</keyword>
<keyword id="KW-0862">Zinc</keyword>
<organism>
    <name type="scientific">Rhizobium leguminosarum bv. viciae</name>
    <dbReference type="NCBI Taxonomy" id="387"/>
    <lineage>
        <taxon>Bacteria</taxon>
        <taxon>Pseudomonadati</taxon>
        <taxon>Pseudomonadota</taxon>
        <taxon>Alphaproteobacteria</taxon>
        <taxon>Hyphomicrobiales</taxon>
        <taxon>Rhizobiaceae</taxon>
        <taxon>Rhizobium/Agrobacterium group</taxon>
        <taxon>Rhizobium</taxon>
    </lineage>
</organism>
<sequence>MCTVCGCGTSAIEGHTHEVGDDGHGHHHHDGHHDHDHDHDHHRGDHEHDDHHHAEDGSVHYSKGIAGVHVPGMSQERIIQVEKDILSKNDAYAAENRRHFERQGVFALNFVSSPGSGKTSLLVRTIKDLKDRLSISVIEGDQQTSNDAARIRETGARAIQINTGKGCHLDAHMVGHAVEDLAPEPGSALFIENVGNLVCPAAFDLGEAHKVVVLSVTEGEDKPLKYPDMFAAADLMILNKADLLPHLDFNTGFCIANALRVNPRLQTLTVSARTGEGMEAFYAWLEVSAARRAIRSKVA</sequence>
<reference key="1">
    <citation type="journal article" date="1993" name="Mol. Microbiol.">
        <title>Molecular analysis of a microaerobically induced operon required for hydrogenase synthesis in Rhizobium leguminosarum biovar viciae.</title>
        <authorList>
            <person name="Rey L."/>
            <person name="Murillo J."/>
            <person name="Hernando Y."/>
            <person name="Hidalgo E."/>
            <person name="Cabrera E."/>
            <person name="Imperial J."/>
            <person name="Ruiz-Argueso T."/>
        </authorList>
    </citation>
    <scope>NUCLEOTIDE SEQUENCE [GENOMIC DNA]</scope>
    <scope>DISRUPTION PHENOTYPE</scope>
    <source>
        <strain>128c53</strain>
    </source>
</reference>
<reference key="2">
    <citation type="journal article" date="1997" name="Mol. Plant Microbe Interact.">
        <title>Organization of the hup-region and its differential transcription in non-symbiotic and symbiotic cells of Rhizobium leguminosarum bv. viciae B10.</title>
        <authorList>
            <person name="Brito B."/>
            <person name="Palacios J.M."/>
            <person name="Imperial J."/>
            <person name="Ruiz-Argueso T."/>
            <person name="Yang W.C."/>
            <person name="Bisseling T."/>
            <person name="Schmitt H."/>
            <person name="Kerl V."/>
            <person name="Bauer T."/>
            <person name="Kokotek W."/>
            <person name="Lotz W."/>
        </authorList>
    </citation>
    <scope>NUCLEOTIDE SEQUENCE [GENOMIC DNA]</scope>
    <source>
        <strain>B10</strain>
    </source>
</reference>
<reference key="3">
    <citation type="journal article" date="1994" name="J. Bacteriol.">
        <title>Purification of Rhizobium leguminosarum HypB, a nickel-binding protein required for hydrogenase synthesis.</title>
        <authorList>
            <person name="Rey L."/>
            <person name="Imperial J."/>
            <person name="Palacios J.M."/>
            <person name="Ruiz-Argueeso T."/>
        </authorList>
    </citation>
    <scope>PROTEIN SEQUENCE OF 2-13</scope>
    <scope>FUNCTION</scope>
    <scope>NICKEL-BINDING</scope>
    <scope>DEVELOPMENTAL STAGE</scope>
    <scope>DOMAIN</scope>
</reference>
<gene>
    <name evidence="5" type="primary">hypB</name>
    <name type="synonym">hupM</name>
</gene>
<protein>
    <recommendedName>
        <fullName evidence="1">Hydrogenase maturation factor HypB</fullName>
    </recommendedName>
</protein>